<accession>Q9HVV3</accession>
<gene>
    <name type="ordered locus">PA4465</name>
</gene>
<protein>
    <recommendedName>
        <fullName evidence="1">Nucleotide-binding protein PA4465</fullName>
    </recommendedName>
</protein>
<evidence type="ECO:0000255" key="1">
    <source>
        <dbReference type="HAMAP-Rule" id="MF_00636"/>
    </source>
</evidence>
<reference key="1">
    <citation type="journal article" date="2000" name="Nature">
        <title>Complete genome sequence of Pseudomonas aeruginosa PAO1, an opportunistic pathogen.</title>
        <authorList>
            <person name="Stover C.K."/>
            <person name="Pham X.-Q.T."/>
            <person name="Erwin A.L."/>
            <person name="Mizoguchi S.D."/>
            <person name="Warrener P."/>
            <person name="Hickey M.J."/>
            <person name="Brinkman F.S.L."/>
            <person name="Hufnagle W.O."/>
            <person name="Kowalik D.J."/>
            <person name="Lagrou M."/>
            <person name="Garber R.L."/>
            <person name="Goltry L."/>
            <person name="Tolentino E."/>
            <person name="Westbrock-Wadman S."/>
            <person name="Yuan Y."/>
            <person name="Brody L.L."/>
            <person name="Coulter S.N."/>
            <person name="Folger K.R."/>
            <person name="Kas A."/>
            <person name="Larbig K."/>
            <person name="Lim R.M."/>
            <person name="Smith K.A."/>
            <person name="Spencer D.H."/>
            <person name="Wong G.K.-S."/>
            <person name="Wu Z."/>
            <person name="Paulsen I.T."/>
            <person name="Reizer J."/>
            <person name="Saier M.H. Jr."/>
            <person name="Hancock R.E.W."/>
            <person name="Lory S."/>
            <person name="Olson M.V."/>
        </authorList>
    </citation>
    <scope>NUCLEOTIDE SEQUENCE [LARGE SCALE GENOMIC DNA]</scope>
    <source>
        <strain>ATCC 15692 / DSM 22644 / CIP 104116 / JCM 14847 / LMG 12228 / 1C / PRS 101 / PAO1</strain>
    </source>
</reference>
<sequence length="286" mass="32219">MRLIIVSGRSGSGKSTALNVLEDNGFYCIDNLPASLLPDLAQRALLHTELLQPQVAVSIDARNLPSQLQRFPELLQEVRDNHINCDVLYLDADDETLLKRFSETRRRHPLTTDTRSLAEAIGDESQLLGPIADLADLKLDTTSLNLYQLRDTIKLRLLNKPEPGTAFLVESFGFKRGMPVDADLVFDVRCLPNPYWKPELRDHSGLEPEVREYLAAQPDVEEMYQDIVGYLNKWLPRFAASNRSYVTVAIGCTGGHHRSVYLAERIGAALRDSLKNVQIRHRDLSS</sequence>
<dbReference type="EMBL" id="AE004091">
    <property type="protein sequence ID" value="AAG07853.1"/>
    <property type="molecule type" value="Genomic_DNA"/>
</dbReference>
<dbReference type="PIR" id="A83088">
    <property type="entry name" value="A83088"/>
</dbReference>
<dbReference type="RefSeq" id="NP_253155.1">
    <property type="nucleotide sequence ID" value="NC_002516.2"/>
</dbReference>
<dbReference type="SMR" id="Q9HVV3"/>
<dbReference type="FunCoup" id="Q9HVV3">
    <property type="interactions" value="221"/>
</dbReference>
<dbReference type="STRING" id="208964.PA4465"/>
<dbReference type="PaxDb" id="208964-PA4465"/>
<dbReference type="GeneID" id="880998"/>
<dbReference type="KEGG" id="pae:PA4465"/>
<dbReference type="PATRIC" id="fig|208964.12.peg.4675"/>
<dbReference type="PseudoCAP" id="PA4465"/>
<dbReference type="HOGENOM" id="CLU_059558_1_1_6"/>
<dbReference type="InParanoid" id="Q9HVV3"/>
<dbReference type="OrthoDB" id="9784461at2"/>
<dbReference type="PhylomeDB" id="Q9HVV3"/>
<dbReference type="BioCyc" id="PAER208964:G1FZ6-4554-MONOMER"/>
<dbReference type="Proteomes" id="UP000002438">
    <property type="component" value="Chromosome"/>
</dbReference>
<dbReference type="GO" id="GO:0005524">
    <property type="term" value="F:ATP binding"/>
    <property type="evidence" value="ECO:0007669"/>
    <property type="project" value="UniProtKB-UniRule"/>
</dbReference>
<dbReference type="GO" id="GO:0005525">
    <property type="term" value="F:GTP binding"/>
    <property type="evidence" value="ECO:0007669"/>
    <property type="project" value="UniProtKB-UniRule"/>
</dbReference>
<dbReference type="GO" id="GO:0060090">
    <property type="term" value="F:molecular adaptor activity"/>
    <property type="evidence" value="ECO:0000318"/>
    <property type="project" value="GO_Central"/>
</dbReference>
<dbReference type="Gene3D" id="3.40.50.300">
    <property type="entry name" value="P-loop containing nucleotide triphosphate hydrolases"/>
    <property type="match status" value="1"/>
</dbReference>
<dbReference type="HAMAP" id="MF_00636">
    <property type="entry name" value="RapZ_like"/>
    <property type="match status" value="1"/>
</dbReference>
<dbReference type="InterPro" id="IPR027417">
    <property type="entry name" value="P-loop_NTPase"/>
</dbReference>
<dbReference type="InterPro" id="IPR005337">
    <property type="entry name" value="RapZ-like"/>
</dbReference>
<dbReference type="InterPro" id="IPR053930">
    <property type="entry name" value="RapZ-like_N"/>
</dbReference>
<dbReference type="InterPro" id="IPR053931">
    <property type="entry name" value="RapZ_C"/>
</dbReference>
<dbReference type="NCBIfam" id="NF003828">
    <property type="entry name" value="PRK05416.1"/>
    <property type="match status" value="1"/>
</dbReference>
<dbReference type="PANTHER" id="PTHR30448">
    <property type="entry name" value="RNASE ADAPTER PROTEIN RAPZ"/>
    <property type="match status" value="1"/>
</dbReference>
<dbReference type="PANTHER" id="PTHR30448:SF0">
    <property type="entry name" value="RNASE ADAPTER PROTEIN RAPZ"/>
    <property type="match status" value="1"/>
</dbReference>
<dbReference type="Pfam" id="PF22740">
    <property type="entry name" value="PapZ_C"/>
    <property type="match status" value="1"/>
</dbReference>
<dbReference type="Pfam" id="PF03668">
    <property type="entry name" value="RapZ-like_N"/>
    <property type="match status" value="1"/>
</dbReference>
<dbReference type="PIRSF" id="PIRSF005052">
    <property type="entry name" value="P-loopkin"/>
    <property type="match status" value="1"/>
</dbReference>
<dbReference type="SUPFAM" id="SSF52540">
    <property type="entry name" value="P-loop containing nucleoside triphosphate hydrolases"/>
    <property type="match status" value="1"/>
</dbReference>
<organism>
    <name type="scientific">Pseudomonas aeruginosa (strain ATCC 15692 / DSM 22644 / CIP 104116 / JCM 14847 / LMG 12228 / 1C / PRS 101 / PAO1)</name>
    <dbReference type="NCBI Taxonomy" id="208964"/>
    <lineage>
        <taxon>Bacteria</taxon>
        <taxon>Pseudomonadati</taxon>
        <taxon>Pseudomonadota</taxon>
        <taxon>Gammaproteobacteria</taxon>
        <taxon>Pseudomonadales</taxon>
        <taxon>Pseudomonadaceae</taxon>
        <taxon>Pseudomonas</taxon>
    </lineage>
</organism>
<feature type="chain" id="PRO_0000107744" description="Nucleotide-binding protein PA4465">
    <location>
        <begin position="1"/>
        <end position="286"/>
    </location>
</feature>
<feature type="binding site" evidence="1">
    <location>
        <begin position="8"/>
        <end position="15"/>
    </location>
    <ligand>
        <name>ATP</name>
        <dbReference type="ChEBI" id="CHEBI:30616"/>
    </ligand>
</feature>
<feature type="binding site" evidence="1">
    <location>
        <begin position="60"/>
        <end position="63"/>
    </location>
    <ligand>
        <name>GTP</name>
        <dbReference type="ChEBI" id="CHEBI:37565"/>
    </ligand>
</feature>
<proteinExistence type="inferred from homology"/>
<keyword id="KW-0067">ATP-binding</keyword>
<keyword id="KW-0342">GTP-binding</keyword>
<keyword id="KW-0547">Nucleotide-binding</keyword>
<keyword id="KW-1185">Reference proteome</keyword>
<comment type="function">
    <text evidence="1">Displays ATPase and GTPase activities.</text>
</comment>
<comment type="similarity">
    <text evidence="1">Belongs to the RapZ-like family.</text>
</comment>
<name>Y4465_PSEAE</name>